<name>AT5F1_BOVIN</name>
<gene>
    <name evidence="2" type="primary">ATP5PB</name>
    <name type="synonym">ATP5F</name>
    <name type="synonym">ATP5F1</name>
</gene>
<reference key="1">
    <citation type="submission" date="2005-11" db="EMBL/GenBank/DDBJ databases">
        <authorList>
            <consortium name="NIH - Mammalian Gene Collection (MGC) project"/>
        </authorList>
    </citation>
    <scope>NUCLEOTIDE SEQUENCE [LARGE SCALE MRNA]</scope>
    <source>
        <strain>Crossbred X Angus</strain>
        <tissue>Liver</tissue>
    </source>
</reference>
<reference key="2">
    <citation type="journal article" date="1987" name="J. Mol. Biol.">
        <title>ATP synthase from bovine mitochondria. The characterization and sequence analysis of two membrane-associated sub-units and of the corresponding cDNAs.</title>
        <authorList>
            <person name="Walker J.E."/>
            <person name="Runswick M.J."/>
            <person name="Poulter L."/>
        </authorList>
    </citation>
    <scope>NUCLEOTIDE SEQUENCE [MRNA] OF 43-256</scope>
    <scope>PROTEIN SEQUENCE OF 43-256</scope>
</reference>
<reference key="3">
    <citation type="journal article" date="1991" name="Biochemistry">
        <title>Identification of the subunits of F1F0-ATPase from bovine heart mitochondria.</title>
        <authorList>
            <person name="Walker J.E."/>
            <person name="Lutter R."/>
            <person name="Dupuis A."/>
            <person name="Runswick M.J."/>
        </authorList>
    </citation>
    <scope>PROTEIN SEQUENCE OF 43-53</scope>
    <source>
        <tissue>Heart</tissue>
    </source>
</reference>
<reference key="4">
    <citation type="journal article" date="2007" name="FEBS Lett.">
        <title>Association of two proteolipids of unknown function with ATP synthase from bovine heart mitochondria.</title>
        <authorList>
            <person name="Chen R."/>
            <person name="Runswick M.J."/>
            <person name="Carroll J."/>
            <person name="Fearnley I.M."/>
            <person name="Walker J.E."/>
        </authorList>
    </citation>
    <scope>IDENTIFICATION IN THE ATP SYNTHASE COMPLEX</scope>
</reference>
<reference key="5">
    <citation type="journal article" date="2015" name="J. Biol. Chem.">
        <title>Organization of Subunits in the Membrane Domain of the Bovine F-ATPase Revealed by Covalent Cross-linking.</title>
        <authorList>
            <person name="Lee J."/>
            <person name="Ding S."/>
            <person name="Walpole T.B."/>
            <person name="Holding A.N."/>
            <person name="Montgomery M.G."/>
            <person name="Fearnley I.M."/>
            <person name="Walker J.E."/>
        </authorList>
    </citation>
    <scope>IDENTIFICATION BY MASS SPECTROMETRY</scope>
    <scope>IDENTIFICATION IN THE ATP SYNTHASE COMPLEX</scope>
</reference>
<comment type="function">
    <text evidence="1 2 9">Subunit b, of the mitochondrial membrane ATP synthase complex (F(1)F(0) ATP synthase or Complex V) that produces ATP from ADP in the presence of a proton gradient across the membrane which is generated by electron transport complexes of the respiratory chain. ATP synthase complex consist of a soluble F(1) head domain - the catalytic core - and a membrane F(1) domain - the membrane proton channel. These two domains are linked by a central stalk rotating inside the F(1) region and a stationary peripheral stalk. During catalysis, ATP synthesis in the catalytic domain of F(1) is coupled via a rotary mechanism of the central stalk subunits to proton translocation (By similarity). In vivo, can only synthesize ATP although its ATP hydrolase activity can be activated artificially in vitro (By similarity). Part of the complex F(0) domain (By similarity). Part of the complex F(0) domain and the peripheric stalk, which acts as a stator to hold the catalytic alpha(3)beta(3) subcomplex and subunit a/ATP6 static relative to the rotary elements (Probable).</text>
</comment>
<comment type="subunit">
    <text evidence="2 4 6">Component of the ATP synthase complex composed at least of ATP5F1A/subunit alpha, ATP5F1B/subunit beta, ATP5MC1/subunit c (homooctomer), MT-ATP6/subunit a, MT-ATP8/subunit 8, ATP5ME/subunit e, ATP5MF/subunit f, ATP5MG/subunit g, ATP5MK/subunit k, ATP5MJ/subunit j, ATP5F1C/subunit gamma, ATP5F1D/subunit delta, ATP5F1E/subunit epsilon, ATP5PF/subunit F6, ATP5PB/subunit b, ATP5PD/subunit d, ATP5PO/subunit OSCP (PubMed:17570365, PubMed:25851905). ATP synthase complex consists of a soluble F(1) head domain (subunits alpha(3) and beta(3)) - the catalytic core - and a membrane F(0) domain - the membrane proton channel (subunits c, a, 8, e, f, g, k and j). These two domains are linked by a central stalk (subunits gamma, delta, and epsilon) rotating inside the F1 region and a stationary peripheral stalk (subunits F6, b, d, and OSCP) (By similarity).</text>
</comment>
<comment type="subcellular location">
    <subcellularLocation>
        <location>Mitochondrion</location>
    </subcellularLocation>
    <subcellularLocation>
        <location>Mitochondrion inner membrane</location>
    </subcellularLocation>
</comment>
<comment type="similarity">
    <text evidence="8">Belongs to the eukaryotic ATPase B chain family.</text>
</comment>
<protein>
    <recommendedName>
        <fullName evidence="8">ATP synthase peripheral stalk subunit b, mitochondrial</fullName>
    </recommendedName>
    <alternativeName>
        <fullName evidence="8">ATP synthase F(0) complex subunit B1, mitochondrial</fullName>
    </alternativeName>
    <alternativeName>
        <fullName evidence="8">ATP synthase peripheral stalk-membrane subunit b</fullName>
    </alternativeName>
    <alternativeName>
        <fullName>ATP synthase subunit b</fullName>
        <shortName>ATPase subunit b</shortName>
    </alternativeName>
</protein>
<proteinExistence type="evidence at protein level"/>
<accession>P13619</accession>
<accession>Q2TBH4</accession>
<sequence length="256" mass="28822">MLSRVVLSAAAAAAPSLKNAALLGPGVLQATRIFHTGQPSLAPVPPLPEHGGKVRFGLIPEEFFQFLYPKTGVTGPYVLGTGLILYLLSKEIYVITPETFSAISTIGFLVYIVKKYGASVGEFADKLNEQKIAQLEEVKQASIKQIQDAIDMEKSQQALVQKRHYLFDVQRNNIAMALEVTYRERLHRVYREVKNRLDYHISVQNMMRQKEQEHMINWVEKRVVQSISAQQEKETIAKCIADLKLLSKKAQAQPVM</sequence>
<organism>
    <name type="scientific">Bos taurus</name>
    <name type="common">Bovine</name>
    <dbReference type="NCBI Taxonomy" id="9913"/>
    <lineage>
        <taxon>Eukaryota</taxon>
        <taxon>Metazoa</taxon>
        <taxon>Chordata</taxon>
        <taxon>Craniata</taxon>
        <taxon>Vertebrata</taxon>
        <taxon>Euteleostomi</taxon>
        <taxon>Mammalia</taxon>
        <taxon>Eutheria</taxon>
        <taxon>Laurasiatheria</taxon>
        <taxon>Artiodactyla</taxon>
        <taxon>Ruminantia</taxon>
        <taxon>Pecora</taxon>
        <taxon>Bovidae</taxon>
        <taxon>Bovinae</taxon>
        <taxon>Bos</taxon>
    </lineage>
</organism>
<dbReference type="EMBL" id="BC110212">
    <property type="protein sequence ID" value="AAI10213.1"/>
    <property type="molecule type" value="mRNA"/>
</dbReference>
<dbReference type="EMBL" id="X06088">
    <property type="protein sequence ID" value="CAA29472.1"/>
    <property type="molecule type" value="mRNA"/>
</dbReference>
<dbReference type="PIR" id="S00763">
    <property type="entry name" value="S00763"/>
</dbReference>
<dbReference type="RefSeq" id="NP_001033590.1">
    <property type="nucleotide sequence ID" value="NM_001038501.2"/>
</dbReference>
<dbReference type="PDB" id="2CLY">
    <property type="method" value="X-ray"/>
    <property type="resolution" value="2.80 A"/>
    <property type="chains" value="A/D=43-256"/>
</dbReference>
<dbReference type="PDB" id="2WSS">
    <property type="method" value="X-ray"/>
    <property type="resolution" value="3.20 A"/>
    <property type="chains" value="T/X=141-256"/>
</dbReference>
<dbReference type="PDB" id="4B2Q">
    <property type="method" value="EM"/>
    <property type="resolution" value="37.00 A"/>
    <property type="chains" value="T/t=121-249"/>
</dbReference>
<dbReference type="PDB" id="5ARA">
    <property type="method" value="EM"/>
    <property type="resolution" value="6.70 A"/>
    <property type="chains" value="T=76-249"/>
</dbReference>
<dbReference type="PDB" id="5ARE">
    <property type="method" value="EM"/>
    <property type="resolution" value="7.40 A"/>
    <property type="chains" value="T=76-249"/>
</dbReference>
<dbReference type="PDB" id="5ARH">
    <property type="method" value="EM"/>
    <property type="resolution" value="7.20 A"/>
    <property type="chains" value="T=76-249"/>
</dbReference>
<dbReference type="PDB" id="5ARI">
    <property type="method" value="EM"/>
    <property type="resolution" value="7.40 A"/>
    <property type="chains" value="T=76-249"/>
</dbReference>
<dbReference type="PDB" id="5FIJ">
    <property type="method" value="EM"/>
    <property type="resolution" value="7.40 A"/>
    <property type="chains" value="T=76-249"/>
</dbReference>
<dbReference type="PDB" id="5FIK">
    <property type="method" value="EM"/>
    <property type="resolution" value="6.40 A"/>
    <property type="chains" value="T=76-249"/>
</dbReference>
<dbReference type="PDB" id="5FIL">
    <property type="method" value="EM"/>
    <property type="resolution" value="7.10 A"/>
    <property type="chains" value="T=76-249"/>
</dbReference>
<dbReference type="PDB" id="6YY0">
    <property type="method" value="EM"/>
    <property type="resolution" value="3.23 A"/>
    <property type="chains" value="b=43-256"/>
</dbReference>
<dbReference type="PDB" id="6Z1R">
    <property type="method" value="EM"/>
    <property type="resolution" value="3.29 A"/>
    <property type="chains" value="b=43-256"/>
</dbReference>
<dbReference type="PDB" id="6Z1U">
    <property type="method" value="EM"/>
    <property type="resolution" value="3.47 A"/>
    <property type="chains" value="b=43-256"/>
</dbReference>
<dbReference type="PDB" id="6ZBB">
    <property type="method" value="EM"/>
    <property type="resolution" value="3.61 A"/>
    <property type="chains" value="b=43-256"/>
</dbReference>
<dbReference type="PDB" id="6ZIQ">
    <property type="method" value="EM"/>
    <property type="resolution" value="4.33 A"/>
    <property type="chains" value="b=43-256"/>
</dbReference>
<dbReference type="PDB" id="6ZIT">
    <property type="method" value="EM"/>
    <property type="resolution" value="3.49 A"/>
    <property type="chains" value="b=43-256"/>
</dbReference>
<dbReference type="PDB" id="6ZIU">
    <property type="method" value="EM"/>
    <property type="resolution" value="6.02 A"/>
    <property type="chains" value="b=43-256"/>
</dbReference>
<dbReference type="PDB" id="6ZPO">
    <property type="method" value="EM"/>
    <property type="resolution" value="4.00 A"/>
    <property type="chains" value="b=43-256"/>
</dbReference>
<dbReference type="PDB" id="6ZQM">
    <property type="method" value="EM"/>
    <property type="resolution" value="3.29 A"/>
    <property type="chains" value="b=43-256"/>
</dbReference>
<dbReference type="PDB" id="6ZQN">
    <property type="method" value="EM"/>
    <property type="resolution" value="4.00 A"/>
    <property type="chains" value="b=43-256"/>
</dbReference>
<dbReference type="PDB" id="7AJB">
    <property type="method" value="EM"/>
    <property type="resolution" value="9.20 A"/>
    <property type="chains" value="Ab/b=43-256"/>
</dbReference>
<dbReference type="PDB" id="7AJC">
    <property type="method" value="EM"/>
    <property type="resolution" value="11.90 A"/>
    <property type="chains" value="Ab/b=43-256"/>
</dbReference>
<dbReference type="PDB" id="7AJD">
    <property type="method" value="EM"/>
    <property type="resolution" value="9.00 A"/>
    <property type="chains" value="Ab/b=43-256"/>
</dbReference>
<dbReference type="PDB" id="7AJE">
    <property type="method" value="EM"/>
    <property type="resolution" value="9.40 A"/>
    <property type="chains" value="Ab/b=43-256"/>
</dbReference>
<dbReference type="PDB" id="7AJF">
    <property type="method" value="EM"/>
    <property type="resolution" value="8.45 A"/>
    <property type="chains" value="Ab/b=43-256"/>
</dbReference>
<dbReference type="PDB" id="7AJG">
    <property type="method" value="EM"/>
    <property type="resolution" value="10.70 A"/>
    <property type="chains" value="Ab/b=43-256"/>
</dbReference>
<dbReference type="PDB" id="7AJH">
    <property type="method" value="EM"/>
    <property type="resolution" value="9.70 A"/>
    <property type="chains" value="Ab/b=43-256"/>
</dbReference>
<dbReference type="PDB" id="7AJI">
    <property type="method" value="EM"/>
    <property type="resolution" value="11.40 A"/>
    <property type="chains" value="Ab/b=43-256"/>
</dbReference>
<dbReference type="PDB" id="7AJJ">
    <property type="method" value="EM"/>
    <property type="resolution" value="13.10 A"/>
    <property type="chains" value="Ab/b=43-256"/>
</dbReference>
<dbReference type="PDBsum" id="2CLY"/>
<dbReference type="PDBsum" id="2WSS"/>
<dbReference type="PDBsum" id="4B2Q"/>
<dbReference type="PDBsum" id="5ARA"/>
<dbReference type="PDBsum" id="5ARE"/>
<dbReference type="PDBsum" id="5ARH"/>
<dbReference type="PDBsum" id="5ARI"/>
<dbReference type="PDBsum" id="5FIJ"/>
<dbReference type="PDBsum" id="5FIK"/>
<dbReference type="PDBsum" id="5FIL"/>
<dbReference type="PDBsum" id="6YY0"/>
<dbReference type="PDBsum" id="6Z1R"/>
<dbReference type="PDBsum" id="6Z1U"/>
<dbReference type="PDBsum" id="6ZBB"/>
<dbReference type="PDBsum" id="6ZIQ"/>
<dbReference type="PDBsum" id="6ZIT"/>
<dbReference type="PDBsum" id="6ZIU"/>
<dbReference type="PDBsum" id="6ZPO"/>
<dbReference type="PDBsum" id="6ZQM"/>
<dbReference type="PDBsum" id="6ZQN"/>
<dbReference type="PDBsum" id="7AJB"/>
<dbReference type="PDBsum" id="7AJC"/>
<dbReference type="PDBsum" id="7AJD"/>
<dbReference type="PDBsum" id="7AJE"/>
<dbReference type="PDBsum" id="7AJF"/>
<dbReference type="PDBsum" id="7AJG"/>
<dbReference type="PDBsum" id="7AJH"/>
<dbReference type="PDBsum" id="7AJI"/>
<dbReference type="PDBsum" id="7AJJ"/>
<dbReference type="EMDB" id="EMD-11001"/>
<dbReference type="EMDB" id="EMD-11039"/>
<dbReference type="EMDB" id="EMD-11040"/>
<dbReference type="EMDB" id="EMD-11149"/>
<dbReference type="EMDB" id="EMD-11228"/>
<dbReference type="EMDB" id="EMD-11229"/>
<dbReference type="EMDB" id="EMD-11230"/>
<dbReference type="EMDB" id="EMD-11342"/>
<dbReference type="EMDB" id="EMD-11368"/>
<dbReference type="EMDB" id="EMD-11369"/>
<dbReference type="EMDB" id="EMD-11428"/>
<dbReference type="EMDB" id="EMD-11429"/>
<dbReference type="EMDB" id="EMD-11430"/>
<dbReference type="SMR" id="P13619"/>
<dbReference type="CORUM" id="P13619"/>
<dbReference type="DIP" id="DIP-38983N"/>
<dbReference type="FunCoup" id="P13619">
    <property type="interactions" value="1703"/>
</dbReference>
<dbReference type="IntAct" id="P13619">
    <property type="interactions" value="17"/>
</dbReference>
<dbReference type="MINT" id="P13619"/>
<dbReference type="STRING" id="9913.ENSBTAP00000008447"/>
<dbReference type="GlyGen" id="P13619">
    <property type="glycosylation" value="1 site, 1 O-linked glycan (1 site)"/>
</dbReference>
<dbReference type="PaxDb" id="9913-ENSBTAP00000008447"/>
<dbReference type="PeptideAtlas" id="P13619"/>
<dbReference type="GeneID" id="282701"/>
<dbReference type="KEGG" id="bta:282701"/>
<dbReference type="CTD" id="515"/>
<dbReference type="VEuPathDB" id="HostDB:ENSBTAG00000006441"/>
<dbReference type="eggNOG" id="KOG3976">
    <property type="taxonomic scope" value="Eukaryota"/>
</dbReference>
<dbReference type="HOGENOM" id="CLU_087186_1_0_1"/>
<dbReference type="InParanoid" id="P13619"/>
<dbReference type="OMA" id="PEEWFTF"/>
<dbReference type="OrthoDB" id="67388at2759"/>
<dbReference type="TreeFam" id="TF313250"/>
<dbReference type="Reactome" id="R-BTA-163210">
    <property type="pathway name" value="Formation of ATP by chemiosmotic coupling"/>
</dbReference>
<dbReference type="Reactome" id="R-BTA-8949613">
    <property type="pathway name" value="Cristae formation"/>
</dbReference>
<dbReference type="EvolutionaryTrace" id="P13619"/>
<dbReference type="Proteomes" id="UP000009136">
    <property type="component" value="Chromosome 3"/>
</dbReference>
<dbReference type="Bgee" id="ENSBTAG00000006441">
    <property type="expression patterns" value="Expressed in cardiac ventricle and 105 other cell types or tissues"/>
</dbReference>
<dbReference type="GO" id="GO:0005743">
    <property type="term" value="C:mitochondrial inner membrane"/>
    <property type="evidence" value="ECO:0007669"/>
    <property type="project" value="UniProtKB-SubCell"/>
</dbReference>
<dbReference type="GO" id="GO:0005739">
    <property type="term" value="C:mitochondrion"/>
    <property type="evidence" value="ECO:0000305"/>
    <property type="project" value="UniProtKB"/>
</dbReference>
<dbReference type="GO" id="GO:0045259">
    <property type="term" value="C:proton-transporting ATP synthase complex"/>
    <property type="evidence" value="ECO:0000314"/>
    <property type="project" value="UniProtKB"/>
</dbReference>
<dbReference type="GO" id="GO:0015078">
    <property type="term" value="F:proton transmembrane transporter activity"/>
    <property type="evidence" value="ECO:0007669"/>
    <property type="project" value="InterPro"/>
</dbReference>
<dbReference type="GO" id="GO:0015986">
    <property type="term" value="P:proton motive force-driven ATP synthesis"/>
    <property type="evidence" value="ECO:0000318"/>
    <property type="project" value="GO_Central"/>
</dbReference>
<dbReference type="FunFam" id="1.20.5.2210:FF:000001">
    <property type="entry name" value="ATP synthase F(0) complex subunit B1, mitochondrial"/>
    <property type="match status" value="1"/>
</dbReference>
<dbReference type="Gene3D" id="1.20.5.2210">
    <property type="match status" value="1"/>
</dbReference>
<dbReference type="InterPro" id="IPR008688">
    <property type="entry name" value="ATP_synth_Bsub_B/MI25"/>
</dbReference>
<dbReference type="InterPro" id="IPR013837">
    <property type="entry name" value="ATP_synth_F0_suB"/>
</dbReference>
<dbReference type="PANTHER" id="PTHR12733:SF3">
    <property type="entry name" value="ATP SYNTHASE F(0) COMPLEX SUBUNIT B1, MITOCHONDRIAL"/>
    <property type="match status" value="1"/>
</dbReference>
<dbReference type="PANTHER" id="PTHR12733">
    <property type="entry name" value="MITOCHONDRIAL ATP SYNTHASE B CHAIN"/>
    <property type="match status" value="1"/>
</dbReference>
<dbReference type="Pfam" id="PF05405">
    <property type="entry name" value="Mt_ATP-synt_B"/>
    <property type="match status" value="1"/>
</dbReference>
<dbReference type="SUPFAM" id="SSF161060">
    <property type="entry name" value="ATP synthase B chain-like"/>
    <property type="match status" value="1"/>
</dbReference>
<keyword id="KW-0002">3D-structure</keyword>
<keyword id="KW-0007">Acetylation</keyword>
<keyword id="KW-0138">CF(0)</keyword>
<keyword id="KW-0903">Direct protein sequencing</keyword>
<keyword id="KW-0375">Hydrogen ion transport</keyword>
<keyword id="KW-0406">Ion transport</keyword>
<keyword id="KW-0472">Membrane</keyword>
<keyword id="KW-0496">Mitochondrion</keyword>
<keyword id="KW-0999">Mitochondrion inner membrane</keyword>
<keyword id="KW-1185">Reference proteome</keyword>
<keyword id="KW-0809">Transit peptide</keyword>
<keyword id="KW-0813">Transport</keyword>
<feature type="transit peptide" description="Mitochondrion" evidence="5 7">
    <location>
        <begin position="1"/>
        <end position="42"/>
    </location>
</feature>
<feature type="chain" id="PRO_0000071671" description="ATP synthase peripheral stalk subunit b, mitochondrial">
    <location>
        <begin position="43"/>
        <end position="256"/>
    </location>
</feature>
<feature type="modified residue" description="N6-succinyllysine" evidence="3">
    <location>
        <position position="131"/>
    </location>
</feature>
<feature type="modified residue" description="N6-acetyllysine" evidence="3">
    <location>
        <position position="139"/>
    </location>
</feature>
<feature type="modified residue" description="N6-acetyllysine" evidence="3">
    <location>
        <position position="154"/>
    </location>
</feature>
<feature type="modified residue" description="N6-acetyllysine" evidence="3">
    <location>
        <position position="162"/>
    </location>
</feature>
<feature type="modified residue" description="N6-acetyllysine" evidence="2">
    <location>
        <position position="221"/>
    </location>
</feature>
<feature type="modified residue" description="N6-acetyllysine" evidence="2">
    <location>
        <position position="233"/>
    </location>
</feature>
<feature type="modified residue" description="N6-acetyllysine" evidence="3">
    <location>
        <position position="244"/>
    </location>
</feature>
<feature type="sequence conflict" description="In Ref. 3; AA sequence." evidence="8" ref="3">
    <original>K</original>
    <variation>Y</variation>
    <location>
        <position position="53"/>
    </location>
</feature>
<feature type="turn" evidence="12">
    <location>
        <begin position="56"/>
        <end position="58"/>
    </location>
</feature>
<feature type="helix" evidence="12">
    <location>
        <begin position="61"/>
        <end position="71"/>
    </location>
</feature>
<feature type="helix" evidence="12">
    <location>
        <begin position="75"/>
        <end position="89"/>
    </location>
</feature>
<feature type="helix" evidence="11">
    <location>
        <begin position="117"/>
        <end position="119"/>
    </location>
</feature>
<feature type="helix" evidence="10">
    <location>
        <begin position="122"/>
        <end position="159"/>
    </location>
</feature>
<feature type="helix" evidence="10">
    <location>
        <begin position="161"/>
        <end position="163"/>
    </location>
</feature>
<feature type="helix" evidence="10">
    <location>
        <begin position="164"/>
        <end position="223"/>
    </location>
</feature>
<feature type="helix" evidence="11">
    <location>
        <begin position="232"/>
        <end position="250"/>
    </location>
</feature>
<evidence type="ECO:0000250" key="1">
    <source>
        <dbReference type="UniProtKB" id="P19483"/>
    </source>
</evidence>
<evidence type="ECO:0000250" key="2">
    <source>
        <dbReference type="UniProtKB" id="P24539"/>
    </source>
</evidence>
<evidence type="ECO:0000250" key="3">
    <source>
        <dbReference type="UniProtKB" id="Q9CQQ7"/>
    </source>
</evidence>
<evidence type="ECO:0000269" key="4">
    <source>
    </source>
</evidence>
<evidence type="ECO:0000269" key="5">
    <source>
    </source>
</evidence>
<evidence type="ECO:0000269" key="6">
    <source>
    </source>
</evidence>
<evidence type="ECO:0000269" key="7">
    <source>
    </source>
</evidence>
<evidence type="ECO:0000305" key="8"/>
<evidence type="ECO:0000305" key="9">
    <source>
    </source>
</evidence>
<evidence type="ECO:0007829" key="10">
    <source>
        <dbReference type="PDB" id="2CLY"/>
    </source>
</evidence>
<evidence type="ECO:0007829" key="11">
    <source>
        <dbReference type="PDB" id="6YY0"/>
    </source>
</evidence>
<evidence type="ECO:0007829" key="12">
    <source>
        <dbReference type="PDB" id="6ZIT"/>
    </source>
</evidence>